<keyword id="KW-0025">Alternative splicing</keyword>
<keyword id="KW-1003">Cell membrane</keyword>
<keyword id="KW-0225">Disease variant</keyword>
<keyword id="KW-1015">Disulfide bond</keyword>
<keyword id="KW-0325">Glycoprotein</keyword>
<keyword id="KW-0991">Intellectual disability</keyword>
<keyword id="KW-0407">Ion channel</keyword>
<keyword id="KW-0406">Ion transport</keyword>
<keyword id="KW-1071">Ligand-gated ion channel</keyword>
<keyword id="KW-0449">Lipoprotein</keyword>
<keyword id="KW-0472">Membrane</keyword>
<keyword id="KW-0564">Palmitate</keyword>
<keyword id="KW-0597">Phosphoprotein</keyword>
<keyword id="KW-0628">Postsynaptic cell membrane</keyword>
<keyword id="KW-1267">Proteomics identification</keyword>
<keyword id="KW-0675">Receptor</keyword>
<keyword id="KW-1185">Reference proteome</keyword>
<keyword id="KW-0732">Signal</keyword>
<keyword id="KW-0770">Synapse</keyword>
<keyword id="KW-0812">Transmembrane</keyword>
<keyword id="KW-1133">Transmembrane helix</keyword>
<keyword id="KW-0813">Transport</keyword>
<organism>
    <name type="scientific">Homo sapiens</name>
    <name type="common">Human</name>
    <dbReference type="NCBI Taxonomy" id="9606"/>
    <lineage>
        <taxon>Eukaryota</taxon>
        <taxon>Metazoa</taxon>
        <taxon>Chordata</taxon>
        <taxon>Craniata</taxon>
        <taxon>Vertebrata</taxon>
        <taxon>Euteleostomi</taxon>
        <taxon>Mammalia</taxon>
        <taxon>Eutheria</taxon>
        <taxon>Euarchontoglires</taxon>
        <taxon>Primates</taxon>
        <taxon>Haplorrhini</taxon>
        <taxon>Catarrhini</taxon>
        <taxon>Hominidae</taxon>
        <taxon>Homo</taxon>
    </lineage>
</organism>
<dbReference type="EMBL" id="U10302">
    <property type="protein sequence ID" value="AAA67923.1"/>
    <property type="molecule type" value="mRNA"/>
</dbReference>
<dbReference type="EMBL" id="U10301">
    <property type="protein sequence ID" value="AAA67922.1"/>
    <property type="molecule type" value="mRNA"/>
</dbReference>
<dbReference type="EMBL" id="X82068">
    <property type="protein sequence ID" value="CAA57567.1"/>
    <property type="molecule type" value="mRNA"/>
</dbReference>
<dbReference type="EMBL" id="AF159277">
    <property type="protein sequence ID" value="AAF61847.1"/>
    <property type="molecule type" value="Genomic_DNA"/>
</dbReference>
<dbReference type="EMBL" id="AF159262">
    <property type="protein sequence ID" value="AAF61847.1"/>
    <property type="status" value="JOINED"/>
    <property type="molecule type" value="Genomic_DNA"/>
</dbReference>
<dbReference type="EMBL" id="AF159263">
    <property type="protein sequence ID" value="AAF61847.1"/>
    <property type="status" value="JOINED"/>
    <property type="molecule type" value="Genomic_DNA"/>
</dbReference>
<dbReference type="EMBL" id="AF159264">
    <property type="protein sequence ID" value="AAF61847.1"/>
    <property type="status" value="JOINED"/>
    <property type="molecule type" value="Genomic_DNA"/>
</dbReference>
<dbReference type="EMBL" id="AF159265">
    <property type="protein sequence ID" value="AAF61847.1"/>
    <property type="status" value="JOINED"/>
    <property type="molecule type" value="Genomic_DNA"/>
</dbReference>
<dbReference type="EMBL" id="AF159266">
    <property type="protein sequence ID" value="AAF61847.1"/>
    <property type="status" value="JOINED"/>
    <property type="molecule type" value="Genomic_DNA"/>
</dbReference>
<dbReference type="EMBL" id="AF159267">
    <property type="protein sequence ID" value="AAF61847.1"/>
    <property type="status" value="JOINED"/>
    <property type="molecule type" value="Genomic_DNA"/>
</dbReference>
<dbReference type="EMBL" id="AF159268">
    <property type="protein sequence ID" value="AAF61847.1"/>
    <property type="status" value="JOINED"/>
    <property type="molecule type" value="Genomic_DNA"/>
</dbReference>
<dbReference type="EMBL" id="AF159269">
    <property type="protein sequence ID" value="AAF61847.1"/>
    <property type="status" value="JOINED"/>
    <property type="molecule type" value="Genomic_DNA"/>
</dbReference>
<dbReference type="EMBL" id="AF159270">
    <property type="protein sequence ID" value="AAF61847.1"/>
    <property type="status" value="JOINED"/>
    <property type="molecule type" value="Genomic_DNA"/>
</dbReference>
<dbReference type="EMBL" id="AF159271">
    <property type="protein sequence ID" value="AAF61847.1"/>
    <property type="status" value="JOINED"/>
    <property type="molecule type" value="Genomic_DNA"/>
</dbReference>
<dbReference type="EMBL" id="AF159272">
    <property type="protein sequence ID" value="AAF61847.1"/>
    <property type="status" value="JOINED"/>
    <property type="molecule type" value="Genomic_DNA"/>
</dbReference>
<dbReference type="EMBL" id="AF159273">
    <property type="protein sequence ID" value="AAF61847.1"/>
    <property type="status" value="JOINED"/>
    <property type="molecule type" value="Genomic_DNA"/>
</dbReference>
<dbReference type="EMBL" id="AF159274">
    <property type="protein sequence ID" value="AAF61847.1"/>
    <property type="status" value="JOINED"/>
    <property type="molecule type" value="Genomic_DNA"/>
</dbReference>
<dbReference type="EMBL" id="AF159275">
    <property type="protein sequence ID" value="AAF61847.1"/>
    <property type="status" value="JOINED"/>
    <property type="molecule type" value="Genomic_DNA"/>
</dbReference>
<dbReference type="EMBL" id="AF166365">
    <property type="protein sequence ID" value="AAF97857.1"/>
    <property type="molecule type" value="Genomic_DNA"/>
</dbReference>
<dbReference type="EMBL" id="AF166362">
    <property type="protein sequence ID" value="AAF97857.1"/>
    <property type="status" value="JOINED"/>
    <property type="molecule type" value="Genomic_DNA"/>
</dbReference>
<dbReference type="EMBL" id="AF166363">
    <property type="protein sequence ID" value="AAF97857.1"/>
    <property type="status" value="JOINED"/>
    <property type="molecule type" value="Genomic_DNA"/>
</dbReference>
<dbReference type="EMBL" id="AF166364">
    <property type="protein sequence ID" value="AAF97857.1"/>
    <property type="status" value="JOINED"/>
    <property type="molecule type" value="Genomic_DNA"/>
</dbReference>
<dbReference type="EMBL" id="AF167332">
    <property type="protein sequence ID" value="AAF97858.1"/>
    <property type="molecule type" value="Genomic_DNA"/>
</dbReference>
<dbReference type="EMBL" id="AF166366">
    <property type="protein sequence ID" value="AAF97858.1"/>
    <property type="status" value="JOINED"/>
    <property type="molecule type" value="Genomic_DNA"/>
</dbReference>
<dbReference type="EMBL" id="AF166367">
    <property type="protein sequence ID" value="AAF97858.1"/>
    <property type="status" value="JOINED"/>
    <property type="molecule type" value="Genomic_DNA"/>
</dbReference>
<dbReference type="EMBL" id="AF166368">
    <property type="protein sequence ID" value="AAF97858.1"/>
    <property type="status" value="JOINED"/>
    <property type="molecule type" value="Genomic_DNA"/>
</dbReference>
<dbReference type="EMBL" id="AF166369">
    <property type="protein sequence ID" value="AAF97858.1"/>
    <property type="status" value="JOINED"/>
    <property type="molecule type" value="Genomic_DNA"/>
</dbReference>
<dbReference type="EMBL" id="AF166370">
    <property type="protein sequence ID" value="AAF97858.1"/>
    <property type="status" value="JOINED"/>
    <property type="molecule type" value="Genomic_DNA"/>
</dbReference>
<dbReference type="EMBL" id="AF166371">
    <property type="protein sequence ID" value="AAF97858.1"/>
    <property type="status" value="JOINED"/>
    <property type="molecule type" value="Genomic_DNA"/>
</dbReference>
<dbReference type="EMBL" id="AF166372">
    <property type="protein sequence ID" value="AAF97858.1"/>
    <property type="status" value="JOINED"/>
    <property type="molecule type" value="Genomic_DNA"/>
</dbReference>
<dbReference type="EMBL" id="AF166373">
    <property type="protein sequence ID" value="AAF97858.1"/>
    <property type="status" value="JOINED"/>
    <property type="molecule type" value="Genomic_DNA"/>
</dbReference>
<dbReference type="EMBL" id="AF166375">
    <property type="protein sequence ID" value="AAF97858.1"/>
    <property type="status" value="JOINED"/>
    <property type="molecule type" value="Genomic_DNA"/>
</dbReference>
<dbReference type="EMBL" id="AF167332">
    <property type="protein sequence ID" value="AAF97859.1"/>
    <property type="molecule type" value="Genomic_DNA"/>
</dbReference>
<dbReference type="EMBL" id="AF166366">
    <property type="protein sequence ID" value="AAF97859.1"/>
    <property type="status" value="JOINED"/>
    <property type="molecule type" value="Genomic_DNA"/>
</dbReference>
<dbReference type="EMBL" id="AF166367">
    <property type="protein sequence ID" value="AAF97859.1"/>
    <property type="status" value="JOINED"/>
    <property type="molecule type" value="Genomic_DNA"/>
</dbReference>
<dbReference type="EMBL" id="AF166368">
    <property type="protein sequence ID" value="AAF97859.1"/>
    <property type="status" value="JOINED"/>
    <property type="molecule type" value="Genomic_DNA"/>
</dbReference>
<dbReference type="EMBL" id="AF166369">
    <property type="protein sequence ID" value="AAF97859.1"/>
    <property type="status" value="JOINED"/>
    <property type="molecule type" value="Genomic_DNA"/>
</dbReference>
<dbReference type="EMBL" id="AF166370">
    <property type="protein sequence ID" value="AAF97859.1"/>
    <property type="status" value="JOINED"/>
    <property type="molecule type" value="Genomic_DNA"/>
</dbReference>
<dbReference type="EMBL" id="AF166371">
    <property type="protein sequence ID" value="AAF97859.1"/>
    <property type="status" value="JOINED"/>
    <property type="molecule type" value="Genomic_DNA"/>
</dbReference>
<dbReference type="EMBL" id="AF166372">
    <property type="protein sequence ID" value="AAF97859.1"/>
    <property type="status" value="JOINED"/>
    <property type="molecule type" value="Genomic_DNA"/>
</dbReference>
<dbReference type="EMBL" id="AF166373">
    <property type="protein sequence ID" value="AAF97859.1"/>
    <property type="status" value="JOINED"/>
    <property type="molecule type" value="Genomic_DNA"/>
</dbReference>
<dbReference type="EMBL" id="AF166374">
    <property type="protein sequence ID" value="AAF97859.1"/>
    <property type="status" value="JOINED"/>
    <property type="molecule type" value="Genomic_DNA"/>
</dbReference>
<dbReference type="EMBL" id="AL356213">
    <property type="status" value="NOT_ANNOTATED_CDS"/>
    <property type="molecule type" value="Genomic_DNA"/>
</dbReference>
<dbReference type="EMBL" id="AL590139">
    <property type="status" value="NOT_ANNOTATED_CDS"/>
    <property type="molecule type" value="Genomic_DNA"/>
</dbReference>
<dbReference type="EMBL" id="Z83848">
    <property type="status" value="NOT_ANNOTATED_CDS"/>
    <property type="molecule type" value="Genomic_DNA"/>
</dbReference>
<dbReference type="EMBL" id="Z82899">
    <property type="status" value="NOT_ANNOTATED_CDS"/>
    <property type="molecule type" value="Genomic_DNA"/>
</dbReference>
<dbReference type="EMBL" id="AL035426">
    <property type="status" value="NOT_ANNOTATED_CDS"/>
    <property type="molecule type" value="Genomic_DNA"/>
</dbReference>
<dbReference type="EMBL" id="CH471107">
    <property type="protein sequence ID" value="EAX11865.1"/>
    <property type="molecule type" value="Genomic_DNA"/>
</dbReference>
<dbReference type="EMBL" id="CH471107">
    <property type="protein sequence ID" value="EAX11867.1"/>
    <property type="molecule type" value="Genomic_DNA"/>
</dbReference>
<dbReference type="CCDS" id="CCDS14604.1">
    <molecule id="P42263-1"/>
</dbReference>
<dbReference type="CCDS" id="CCDS14605.1">
    <molecule id="P42263-2"/>
</dbReference>
<dbReference type="PIR" id="S49460">
    <property type="entry name" value="S49460"/>
</dbReference>
<dbReference type="PIR" id="S50128">
    <property type="entry name" value="S50128"/>
</dbReference>
<dbReference type="PIR" id="S53696">
    <property type="entry name" value="S53696"/>
</dbReference>
<dbReference type="RefSeq" id="NP_000819.4">
    <molecule id="P42263-1"/>
    <property type="nucleotide sequence ID" value="NM_000828.5"/>
</dbReference>
<dbReference type="RefSeq" id="NP_015564.4">
    <molecule id="P42263-2"/>
    <property type="nucleotide sequence ID" value="NM_007325.4"/>
</dbReference>
<dbReference type="SMR" id="P42263"/>
<dbReference type="BioGRID" id="109149">
    <property type="interactions" value="32"/>
</dbReference>
<dbReference type="DIP" id="DIP-46195N"/>
<dbReference type="FunCoup" id="P42263">
    <property type="interactions" value="940"/>
</dbReference>
<dbReference type="IntAct" id="P42263">
    <property type="interactions" value="18"/>
</dbReference>
<dbReference type="MINT" id="P42263"/>
<dbReference type="STRING" id="9606.ENSP00000481554"/>
<dbReference type="BindingDB" id="P42263"/>
<dbReference type="ChEMBL" id="CHEMBL3595"/>
<dbReference type="DrugBank" id="DB04599">
    <property type="generic name" value="Aniracetam"/>
</dbReference>
<dbReference type="DrugBank" id="DB00237">
    <property type="generic name" value="Butabarbital"/>
</dbReference>
<dbReference type="DrugBank" id="DB05047">
    <property type="generic name" value="CX-717"/>
</dbReference>
<dbReference type="DrugBank" id="DB00898">
    <property type="generic name" value="Ethanol"/>
</dbReference>
<dbReference type="DrugBank" id="DB13146">
    <property type="generic name" value="Fluciclovine (18F)"/>
</dbReference>
<dbReference type="DrugBank" id="DB02966">
    <property type="generic name" value="Fluoro-Willardiine"/>
</dbReference>
<dbReference type="DrugBank" id="DB00142">
    <property type="generic name" value="Glutamic acid"/>
</dbReference>
<dbReference type="DrugBank" id="DB14509">
    <property type="generic name" value="Lithium carbonate"/>
</dbReference>
<dbReference type="DrugBank" id="DB01356">
    <property type="generic name" value="Lithium cation"/>
</dbReference>
<dbReference type="DrugBank" id="DB14507">
    <property type="generic name" value="Lithium citrate"/>
</dbReference>
<dbReference type="DrugBank" id="DB14508">
    <property type="generic name" value="Lithium succinate"/>
</dbReference>
<dbReference type="DrugBank" id="DB08883">
    <property type="generic name" value="Perampanel"/>
</dbReference>
<dbReference type="DrugBank" id="DB04982">
    <property type="generic name" value="Talampanel"/>
</dbReference>
<dbReference type="DrugCentral" id="P42263"/>
<dbReference type="GuidetoPHARMACOLOGY" id="446"/>
<dbReference type="TCDB" id="1.A.10.1.4">
    <property type="family name" value="the glutamate-gated ion channel (gic) family of neurotransmitter receptors"/>
</dbReference>
<dbReference type="GlyCosmos" id="P42263">
    <property type="glycosylation" value="5 sites, No reported glycans"/>
</dbReference>
<dbReference type="GlyGen" id="P42263">
    <property type="glycosylation" value="6 sites"/>
</dbReference>
<dbReference type="iPTMnet" id="P42263"/>
<dbReference type="PhosphoSitePlus" id="P42263"/>
<dbReference type="SwissPalm" id="P42263"/>
<dbReference type="BioMuta" id="GRIA3"/>
<dbReference type="DMDM" id="77416864"/>
<dbReference type="MassIVE" id="P42263"/>
<dbReference type="PaxDb" id="9606-ENSP00000481554"/>
<dbReference type="PeptideAtlas" id="P42263"/>
<dbReference type="ProteomicsDB" id="55501">
    <molecule id="P42263-1"/>
</dbReference>
<dbReference type="ProteomicsDB" id="55502">
    <molecule id="P42263-2"/>
</dbReference>
<dbReference type="Antibodypedia" id="29962">
    <property type="antibodies" value="348 antibodies from 30 providers"/>
</dbReference>
<dbReference type="DNASU" id="2892"/>
<dbReference type="Ensembl" id="ENST00000620443.2">
    <molecule id="P42263-2"/>
    <property type="protein sequence ID" value="ENSP00000478489.1"/>
    <property type="gene ID" value="ENSG00000125675.20"/>
</dbReference>
<dbReference type="Ensembl" id="ENST00000622768.5">
    <molecule id="P42263-1"/>
    <property type="protein sequence ID" value="ENSP00000481554.1"/>
    <property type="gene ID" value="ENSG00000125675.20"/>
</dbReference>
<dbReference type="GeneID" id="2892"/>
<dbReference type="KEGG" id="hsa:2892"/>
<dbReference type="MANE-Select" id="ENST00000620443.2">
    <molecule id="P42263-2"/>
    <property type="protein sequence ID" value="ENSP00000478489.1"/>
    <property type="RefSeq nucleotide sequence ID" value="NM_007325.5"/>
    <property type="RefSeq protein sequence ID" value="NP_015564.5"/>
</dbReference>
<dbReference type="UCSC" id="uc033etl.2">
    <molecule id="P42263-1"/>
    <property type="organism name" value="human"/>
</dbReference>
<dbReference type="AGR" id="HGNC:4573"/>
<dbReference type="CTD" id="2892"/>
<dbReference type="DisGeNET" id="2892"/>
<dbReference type="GeneCards" id="GRIA3"/>
<dbReference type="HGNC" id="HGNC:4573">
    <property type="gene designation" value="GRIA3"/>
</dbReference>
<dbReference type="HPA" id="ENSG00000125675">
    <property type="expression patterns" value="Tissue enhanced (brain, retina)"/>
</dbReference>
<dbReference type="MalaCards" id="GRIA3"/>
<dbReference type="MIM" id="300699">
    <property type="type" value="phenotype"/>
</dbReference>
<dbReference type="MIM" id="305915">
    <property type="type" value="gene"/>
</dbReference>
<dbReference type="neXtProt" id="NX_P42263"/>
<dbReference type="OpenTargets" id="ENSG00000125675"/>
<dbReference type="Orphanet" id="364028">
    <property type="disease" value="X-linked intellectual disability due to GRIA3 mutations"/>
</dbReference>
<dbReference type="PharmGKB" id="PA28968"/>
<dbReference type="VEuPathDB" id="HostDB:ENSG00000125675"/>
<dbReference type="eggNOG" id="KOG1054">
    <property type="taxonomic scope" value="Eukaryota"/>
</dbReference>
<dbReference type="GeneTree" id="ENSGT00940000156123"/>
<dbReference type="HOGENOM" id="CLU_007257_1_2_1"/>
<dbReference type="InParanoid" id="P42263"/>
<dbReference type="OMA" id="RTMFRIF"/>
<dbReference type="OrthoDB" id="5984008at2759"/>
<dbReference type="PAN-GO" id="P42263">
    <property type="GO annotations" value="4 GO annotations based on evolutionary models"/>
</dbReference>
<dbReference type="PhylomeDB" id="P42263"/>
<dbReference type="TreeFam" id="TF315232"/>
<dbReference type="PathwayCommons" id="P42263"/>
<dbReference type="Reactome" id="R-HSA-399710">
    <property type="pathway name" value="Activation of AMPA receptors"/>
</dbReference>
<dbReference type="Reactome" id="R-HSA-399719">
    <property type="pathway name" value="Trafficking of AMPA receptors"/>
</dbReference>
<dbReference type="Reactome" id="R-HSA-416993">
    <property type="pathway name" value="Trafficking of GluR2-containing AMPA receptors"/>
</dbReference>
<dbReference type="Reactome" id="R-HSA-438066">
    <property type="pathway name" value="Unblocking of NMDA receptors, glutamate binding and activation"/>
</dbReference>
<dbReference type="Reactome" id="R-HSA-8849932">
    <property type="pathway name" value="Synaptic adhesion-like molecules"/>
</dbReference>
<dbReference type="SignaLink" id="P42263"/>
<dbReference type="SIGNOR" id="P42263"/>
<dbReference type="BioGRID-ORCS" id="2892">
    <property type="hits" value="9 hits in 774 CRISPR screens"/>
</dbReference>
<dbReference type="CD-CODE" id="FB4E32DD">
    <property type="entry name" value="Presynaptic clusters and postsynaptic densities"/>
</dbReference>
<dbReference type="ChiTaRS" id="GRIA3">
    <property type="organism name" value="human"/>
</dbReference>
<dbReference type="GeneWiki" id="GRIA3"/>
<dbReference type="GenomeRNAi" id="2892"/>
<dbReference type="Pharos" id="P42263">
    <property type="development level" value="Tclin"/>
</dbReference>
<dbReference type="PRO" id="PR:P42263"/>
<dbReference type="Proteomes" id="UP000005640">
    <property type="component" value="Chromosome X"/>
</dbReference>
<dbReference type="RNAct" id="P42263">
    <property type="molecule type" value="protein"/>
</dbReference>
<dbReference type="Bgee" id="ENSG00000125675">
    <property type="expression patterns" value="Expressed in Brodmann (1909) area 23 and 143 other cell types or tissues"/>
</dbReference>
<dbReference type="ExpressionAtlas" id="P42263">
    <property type="expression patterns" value="baseline and differential"/>
</dbReference>
<dbReference type="GO" id="GO:0032281">
    <property type="term" value="C:AMPA glutamate receptor complex"/>
    <property type="evidence" value="ECO:0000250"/>
    <property type="project" value="UniProtKB"/>
</dbReference>
<dbReference type="GO" id="GO:0043197">
    <property type="term" value="C:dendritic spine"/>
    <property type="evidence" value="ECO:0000318"/>
    <property type="project" value="GO_Central"/>
</dbReference>
<dbReference type="GO" id="GO:0030666">
    <property type="term" value="C:endocytic vesicle membrane"/>
    <property type="evidence" value="ECO:0000304"/>
    <property type="project" value="Reactome"/>
</dbReference>
<dbReference type="GO" id="GO:0098688">
    <property type="term" value="C:parallel fiber to Purkinje cell synapse"/>
    <property type="evidence" value="ECO:0007669"/>
    <property type="project" value="Ensembl"/>
</dbReference>
<dbReference type="GO" id="GO:0005886">
    <property type="term" value="C:plasma membrane"/>
    <property type="evidence" value="ECO:0000314"/>
    <property type="project" value="UniProtKB"/>
</dbReference>
<dbReference type="GO" id="GO:0098839">
    <property type="term" value="C:postsynaptic density membrane"/>
    <property type="evidence" value="ECO:0000318"/>
    <property type="project" value="GO_Central"/>
</dbReference>
<dbReference type="GO" id="GO:0045211">
    <property type="term" value="C:postsynaptic membrane"/>
    <property type="evidence" value="ECO:0000250"/>
    <property type="project" value="UniProtKB"/>
</dbReference>
<dbReference type="GO" id="GO:0004971">
    <property type="term" value="F:AMPA glutamate receptor activity"/>
    <property type="evidence" value="ECO:0000314"/>
    <property type="project" value="UniProtKB"/>
</dbReference>
<dbReference type="GO" id="GO:0001540">
    <property type="term" value="F:amyloid-beta binding"/>
    <property type="evidence" value="ECO:0000250"/>
    <property type="project" value="ARUK-UCL"/>
</dbReference>
<dbReference type="GO" id="GO:0022849">
    <property type="term" value="F:glutamate-gated calcium ion channel activity"/>
    <property type="evidence" value="ECO:0000250"/>
    <property type="project" value="UniProtKB"/>
</dbReference>
<dbReference type="GO" id="GO:0004970">
    <property type="term" value="F:glutamate-gated receptor activity"/>
    <property type="evidence" value="ECO:0000314"/>
    <property type="project" value="UniProtKB"/>
</dbReference>
<dbReference type="GO" id="GO:0099507">
    <property type="term" value="F:ligand-gated monoatomic ion channel activity involved in regulation of presynaptic membrane potential"/>
    <property type="evidence" value="ECO:0000314"/>
    <property type="project" value="SynGO"/>
</dbReference>
<dbReference type="GO" id="GO:1904315">
    <property type="term" value="F:transmitter-gated monoatomic ion channel activity involved in regulation of postsynaptic membrane potential"/>
    <property type="evidence" value="ECO:0000318"/>
    <property type="project" value="GO_Central"/>
</dbReference>
<dbReference type="GO" id="GO:0007215">
    <property type="term" value="P:glutamate receptor signaling pathway"/>
    <property type="evidence" value="ECO:0000304"/>
    <property type="project" value="ProtInc"/>
</dbReference>
<dbReference type="GO" id="GO:0060291">
    <property type="term" value="P:long-term synaptic potentiation"/>
    <property type="evidence" value="ECO:0000250"/>
    <property type="project" value="UniProtKB"/>
</dbReference>
<dbReference type="GO" id="GO:0050804">
    <property type="term" value="P:modulation of chemical synaptic transmission"/>
    <property type="evidence" value="ECO:0000318"/>
    <property type="project" value="GO_Central"/>
</dbReference>
<dbReference type="GO" id="GO:0051290">
    <property type="term" value="P:protein heterotetramerization"/>
    <property type="evidence" value="ECO:0000314"/>
    <property type="project" value="UniProtKB"/>
</dbReference>
<dbReference type="GO" id="GO:0051289">
    <property type="term" value="P:protein homotetramerization"/>
    <property type="evidence" value="ECO:0000314"/>
    <property type="project" value="UniProtKB"/>
</dbReference>
<dbReference type="GO" id="GO:0035249">
    <property type="term" value="P:synaptic transmission, glutamatergic"/>
    <property type="evidence" value="ECO:0000318"/>
    <property type="project" value="GO_Central"/>
</dbReference>
<dbReference type="CDD" id="cd06387">
    <property type="entry name" value="PBP1_iGluR_AMPA_GluR3"/>
    <property type="match status" value="1"/>
</dbReference>
<dbReference type="CDD" id="cd13715">
    <property type="entry name" value="PBP2_iGluR_AMPA"/>
    <property type="match status" value="1"/>
</dbReference>
<dbReference type="FunFam" id="1.10.287.70:FF:000067">
    <property type="entry name" value="glutamate receptor 2 isoform X1"/>
    <property type="match status" value="1"/>
</dbReference>
<dbReference type="FunFam" id="1.10.287.70:FF:000099">
    <property type="entry name" value="glutamate receptor 2 isoform X1"/>
    <property type="match status" value="1"/>
</dbReference>
<dbReference type="FunFam" id="3.40.190.10:FF:000001">
    <property type="entry name" value="Glutamate receptor ionotropic, kainate 2"/>
    <property type="match status" value="1"/>
</dbReference>
<dbReference type="FunFam" id="3.40.50.2300:FF:000004">
    <property type="entry name" value="Glutamate receptor, ionotropic, AMPA 2"/>
    <property type="match status" value="1"/>
</dbReference>
<dbReference type="FunFam" id="3.40.190.10:FF:000666">
    <property type="entry name" value="Glutamate receptor, ionotropic, AMPA 2a"/>
    <property type="match status" value="1"/>
</dbReference>
<dbReference type="Gene3D" id="1.10.287.70">
    <property type="match status" value="2"/>
</dbReference>
<dbReference type="Gene3D" id="3.40.50.2300">
    <property type="match status" value="2"/>
</dbReference>
<dbReference type="Gene3D" id="3.40.190.10">
    <property type="entry name" value="Periplasmic binding protein-like II"/>
    <property type="match status" value="2"/>
</dbReference>
<dbReference type="InterPro" id="IPR001828">
    <property type="entry name" value="ANF_lig-bd_rcpt"/>
</dbReference>
<dbReference type="InterPro" id="IPR019594">
    <property type="entry name" value="Glu/Gly-bd"/>
</dbReference>
<dbReference type="InterPro" id="IPR001508">
    <property type="entry name" value="Iono_Glu_rcpt_met"/>
</dbReference>
<dbReference type="InterPro" id="IPR015683">
    <property type="entry name" value="Ionotropic_Glu_rcpt"/>
</dbReference>
<dbReference type="InterPro" id="IPR001320">
    <property type="entry name" value="Iontro_rcpt_C"/>
</dbReference>
<dbReference type="InterPro" id="IPR028082">
    <property type="entry name" value="Peripla_BP_I"/>
</dbReference>
<dbReference type="PANTHER" id="PTHR18966">
    <property type="entry name" value="IONOTROPIC GLUTAMATE RECEPTOR"/>
    <property type="match status" value="1"/>
</dbReference>
<dbReference type="Pfam" id="PF01094">
    <property type="entry name" value="ANF_receptor"/>
    <property type="match status" value="1"/>
</dbReference>
<dbReference type="Pfam" id="PF00060">
    <property type="entry name" value="Lig_chan"/>
    <property type="match status" value="1"/>
</dbReference>
<dbReference type="Pfam" id="PF10613">
    <property type="entry name" value="Lig_chan-Glu_bd"/>
    <property type="match status" value="1"/>
</dbReference>
<dbReference type="PRINTS" id="PR00177">
    <property type="entry name" value="NMDARECEPTOR"/>
</dbReference>
<dbReference type="SMART" id="SM00918">
    <property type="entry name" value="Lig_chan-Glu_bd"/>
    <property type="match status" value="1"/>
</dbReference>
<dbReference type="SMART" id="SM00079">
    <property type="entry name" value="PBPe"/>
    <property type="match status" value="1"/>
</dbReference>
<dbReference type="SUPFAM" id="SSF53822">
    <property type="entry name" value="Periplasmic binding protein-like I"/>
    <property type="match status" value="1"/>
</dbReference>
<dbReference type="SUPFAM" id="SSF53850">
    <property type="entry name" value="Periplasmic binding protein-like II"/>
    <property type="match status" value="1"/>
</dbReference>
<dbReference type="SUPFAM" id="SSF81324">
    <property type="entry name" value="Voltage-gated potassium channels"/>
    <property type="match status" value="1"/>
</dbReference>
<gene>
    <name evidence="16" type="primary">GRIA3</name>
    <name type="synonym">GluA3</name>
    <name type="synonym">GLUR3</name>
    <name type="synonym">GLURC</name>
</gene>
<comment type="function">
    <text evidence="2 5 9 10">Ionotropic glutamate receptor that functions as a ligand-gated cation channel, gated by L-glutamate and glutamatergic agonists such as alpha-amino-3-hydroxy-5-methyl-4-isoxazolepropionic acid (AMPA), quisqualic acid, and kainic acid (By similarity). L-glutamate acts as an excitatory neurotransmitter at many synapses in the central nervous system and plays an important role in fast excitatory synaptic transmission by inducing long-term potentiation (By similarity). Binding of the excitatory neurotransmitter L-glutamate induces a conformation change, leading to the opening of the cation channel, and thereby converts the chemical signal to an electrical impulse upon entry of calcium (PubMed:17989220). The receptor then desensitizes rapidly and enters a transient inactive state, characterized by the presence of bound agonist (PubMed:17989220). In the presence of CACNG8, shows resensitization which is characterized by a delayed accumulation of current flux upon continued application of glutamate (PubMed:21172611).</text>
</comment>
<comment type="catalytic activity">
    <reaction evidence="2">
        <text>Ca(2+)(in) = Ca(2+)(out)</text>
        <dbReference type="Rhea" id="RHEA:29671"/>
        <dbReference type="ChEBI" id="CHEBI:29108"/>
    </reaction>
</comment>
<comment type="subunit">
    <text evidence="2 5 9">Homotetramer or heterotetramer of pore-forming glutamate receptor subunits (PubMed:17989220). Tetramers may be formed by the dimerization of dimers. Interacts with PICK1, GRIP1 and GRIP2. Found in a complex with GRIA1, GRIA2, GRIA4, CNIH2, CNIH3, CACNG2, CACNG3, CACNG4, CACNG5, CACNG7 and CACNG8. Interacts with CACNG5 (By similarity). Found in a complex with GRIA1, GRIA2, GRIA4, DLG4, CACNG8 and CNIH2 (By similarity).</text>
</comment>
<comment type="subcellular location">
    <subcellularLocation>
        <location evidence="9">Cell membrane</location>
        <topology evidence="2">Multi-pass membrane protein</topology>
    </subcellularLocation>
    <subcellularLocation>
        <location evidence="2">Postsynaptic cell membrane</location>
        <topology evidence="2">Multi-pass membrane protein</topology>
    </subcellularLocation>
    <subcellularLocation>
        <location evidence="2">Postsynaptic density membrane</location>
    </subcellularLocation>
</comment>
<comment type="alternative products">
    <event type="alternative splicing"/>
    <isoform>
        <id>P42263-1</id>
        <name>Flop</name>
        <sequence type="displayed"/>
    </isoform>
    <isoform>
        <id>P42263-2</id>
        <name>Flip</name>
        <sequence type="described" ref="VSP_053351"/>
    </isoform>
</comment>
<comment type="disease" evidence="9 11">
    <disease id="DI-00739">
        <name>Intellectual developmental disorder, X-linked, syndromic, Wu type</name>
        <acronym>MRXSW</acronym>
        <description>A disorder characterized by significantly below average general intellectual functioning associated with impairments in adaptive behavior and manifested during the developmental period. MRXSW patients have moderate intellectual disability, and additional variable features such as macrocephaly, seizures, myoclonic jerks, autistic behavior, asthenic body habitus, distal muscle weakness and hyporeflexia.</description>
        <dbReference type="MIM" id="300699"/>
    </disease>
    <text>The disease is caused by variants affecting the gene represented in this entry.</text>
</comment>
<comment type="miscellaneous">
    <text evidence="2">The postsynaptic actions of Glu are mediated by a variety of receptors that are named according to their selective agonists. This receptor binds AMPA (quisqualate) &gt; glutamate &gt; kainate.</text>
</comment>
<comment type="similarity">
    <text evidence="15">Belongs to the glutamate-gated ion channel (TC 1.A.10.1) family. GRIA3 subfamily.</text>
</comment>
<comment type="caution">
    <text evidence="15">It is uncertain whether Met-1 or Met-7 is the initiator.</text>
</comment>
<proteinExistence type="evidence at protein level"/>
<sequence>MARQKKMGQSVLRAVFFLVLGLLGHSHGGFPNTISIGGLFMRNTVQEHSAFRFAVQLYNTNQNTTEKPFHLNYHVDHLDSSNSFSVTNAFCSQFSRGVYAIFGFYDQMSMNTLTSFCGALHTSFVTPSFPTDADVQFVIQMRPALKGAILSLLGHYKWEKFVYLYDTERGFSILQAIMEAAVQNNWQVTARSVGNIKDVQEFRRIIEEMDRRQEKRYLIDCEVERINTILEQVVILGKHSRGYHYMLANLGFTDILLERVMHGGANITGFQIVNNENPMVQQFIQRWVRLDEREFPEAKNAPLKYTSALTHDAILVIAEAFRYLRRQRVDVSRRGSAGDCLANPAVPWSQGIDIERALKMVQVQGMTGNIQFDTYGRRTNYTIDVYEMKVSGSRKAGYWNEYERFVPFSDQQISNDSASSENRTIVVTTILESPYVMYKKNHEQLEGNERYEGYCVDLAYEIAKHVRIKYKLSIVGDGKYGARDPETKIWNGMVGELVYGRADIAVAPLTITLVREEVIDFSKPFMSLGISIMIKKPQKSKPGVFSFLDPLAYEIWMCIVFAYIGVSVVLFLVSRFSPYEWHLEDNNEEPRDPQSPPDPPNEFGIFNSLWFSLGAFMQQGCDISPRSLSGRIVGGVWWFFTLIIISSYTANLAAFLTVERMVSPIESAEDLAKQTEIAYGTLDSGSTKEFFRRSKIAVYEKMWSYMKSAEPSVFTKTTADGVARVRKSKGKFAFLLESTMNEYIEQRKPCDTMKVGGNLDSKGYGVATPKGSALRNAVNLAVLKLNEQGLLDKLKNKWWYDKGECGSGGGDSKDKTSALSLSNVAGVFYILVGGLGLAMMVALIEFCYKSRAESKRMKLTKNTQNFKPAPATNTQNYATYREGYNVYGTESVKI</sequence>
<feature type="signal peptide" evidence="6">
    <location>
        <begin position="1"/>
        <end position="28"/>
    </location>
</feature>
<feature type="chain" id="PRO_0000011536" description="Glutamate receptor 3">
    <location>
        <begin position="29"/>
        <end position="894"/>
    </location>
</feature>
<feature type="topological domain" description="Extracellular" evidence="1">
    <location>
        <begin position="29"/>
        <end position="552"/>
    </location>
</feature>
<feature type="transmembrane region" description="Helical" evidence="1">
    <location>
        <begin position="553"/>
        <end position="573"/>
    </location>
</feature>
<feature type="topological domain" description="Cytoplasmic" evidence="1">
    <location>
        <begin position="574"/>
        <end position="602"/>
    </location>
</feature>
<feature type="intramembrane region" description="Helical; Pore-forming" evidence="1">
    <location>
        <begin position="603"/>
        <end position="618"/>
    </location>
</feature>
<feature type="intramembrane region" evidence="1">
    <location>
        <begin position="619"/>
        <end position="621"/>
    </location>
</feature>
<feature type="topological domain" description="Cytoplasmic" evidence="1">
    <location>
        <begin position="622"/>
        <end position="627"/>
    </location>
</feature>
<feature type="transmembrane region" description="Helical" evidence="1">
    <location>
        <begin position="628"/>
        <end position="648"/>
    </location>
</feature>
<feature type="topological domain" description="Extracellular" evidence="1">
    <location>
        <begin position="649"/>
        <end position="823"/>
    </location>
</feature>
<feature type="transmembrane region" description="Helical; Name=M4" evidence="1">
    <location>
        <begin position="824"/>
        <end position="844"/>
    </location>
</feature>
<feature type="topological domain" description="Cytoplasmic" evidence="1">
    <location>
        <begin position="845"/>
        <end position="894"/>
    </location>
</feature>
<feature type="binding site" evidence="2">
    <location>
        <position position="508"/>
    </location>
    <ligand>
        <name>L-glutamate</name>
        <dbReference type="ChEBI" id="CHEBI:29985"/>
    </ligand>
</feature>
<feature type="binding site" evidence="2">
    <location>
        <position position="510"/>
    </location>
    <ligand>
        <name>L-glutamate</name>
        <dbReference type="ChEBI" id="CHEBI:29985"/>
    </ligand>
</feature>
<feature type="binding site" evidence="2">
    <location>
        <position position="515"/>
    </location>
    <ligand>
        <name>L-glutamate</name>
        <dbReference type="ChEBI" id="CHEBI:29985"/>
    </ligand>
</feature>
<feature type="binding site" evidence="2">
    <location>
        <position position="686"/>
    </location>
    <ligand>
        <name>L-glutamate</name>
        <dbReference type="ChEBI" id="CHEBI:29985"/>
    </ligand>
</feature>
<feature type="binding site" evidence="2">
    <location>
        <position position="687"/>
    </location>
    <ligand>
        <name>L-glutamate</name>
        <dbReference type="ChEBI" id="CHEBI:29985"/>
    </ligand>
</feature>
<feature type="binding site" evidence="2">
    <location>
        <position position="737"/>
    </location>
    <ligand>
        <name>L-glutamate</name>
        <dbReference type="ChEBI" id="CHEBI:29985"/>
    </ligand>
</feature>
<feature type="modified residue" description="Phosphotyrosine" evidence="5">
    <location>
        <position position="877"/>
    </location>
</feature>
<feature type="modified residue" description="Phosphotyrosine" evidence="5">
    <location>
        <position position="887"/>
    </location>
</feature>
<feature type="lipid moiety-binding region" description="S-palmitoyl cysteine" evidence="3">
    <location>
        <position position="621"/>
    </location>
</feature>
<feature type="lipid moiety-binding region" description="S-palmitoyl cysteine" evidence="5">
    <location>
        <position position="847"/>
    </location>
</feature>
<feature type="glycosylation site" description="N-linked (GlcNAc...) asparagine" evidence="6">
    <location>
        <position position="63"/>
    </location>
</feature>
<feature type="glycosylation site" description="N-linked (GlcNAc...) asparagine" evidence="6">
    <location>
        <position position="266"/>
    </location>
</feature>
<feature type="glycosylation site" description="N-linked (GlcNAc...) asparagine" evidence="6">
    <location>
        <position position="380"/>
    </location>
</feature>
<feature type="glycosylation site" description="N-linked (GlcNAc...) asparagine" evidence="6">
    <location>
        <position position="415"/>
    </location>
</feature>
<feature type="glycosylation site" description="N-linked (GlcNAc...) asparagine" evidence="6">
    <location>
        <position position="422"/>
    </location>
</feature>
<feature type="disulfide bond" evidence="4">
    <location>
        <begin position="91"/>
        <end position="340"/>
    </location>
</feature>
<feature type="disulfide bond" evidence="5">
    <location>
        <begin position="750"/>
        <end position="805"/>
    </location>
</feature>
<feature type="splice variant" id="VSP_053351" description="In isoform Flip." evidence="14">
    <original>NAVNLAVLKLNEQGLLDKLKNKWWYDKGECGSGGGD</original>
    <variation>TPVNLAVLKLSEQGILDKLKNKWWYDKGECGAKDSG</variation>
    <location>
        <begin position="776"/>
        <end position="811"/>
    </location>
</feature>
<feature type="sequence variant" id="VAR_081437" description="Found in patients with familial episodic ataxia and impairment of speech development; uncertain significance; dbSNP:rs757586471." evidence="12">
    <original>E</original>
    <variation>K</variation>
    <location>
        <position position="224"/>
    </location>
</feature>
<feature type="sequence variant" id="VAR_043484" description="In MRXSW; dbSNP:rs368568228." evidence="9">
    <original>R</original>
    <variation>Q</variation>
    <location>
        <position position="450"/>
    </location>
</feature>
<feature type="sequence variant" id="VAR_023579" description="In dbSNP:rs1052538." evidence="7 8 13">
    <original>F</original>
    <variation>L</variation>
    <location>
        <position position="525"/>
    </location>
</feature>
<feature type="sequence variant" id="VAR_088742" description="In MRXSW; uncertain significance; dbSNP:rs587777361." evidence="11">
    <original>G</original>
    <variation>R</variation>
    <location>
        <position position="630"/>
    </location>
</feature>
<feature type="sequence variant" id="VAR_043485" description="In MRXSW; homomers have minimal or no current; heteromers have altered desensitization kinetics; dbSNP:rs137852351." evidence="9">
    <original>R</original>
    <variation>S</variation>
    <location>
        <position position="631"/>
    </location>
</feature>
<feature type="sequence variant" id="VAR_043486" description="In MRXSW; homomers have minimal or no current; heteromers have altered desensitization kinetics; dbSNP:rs137852352." evidence="9">
    <original>M</original>
    <variation>T</variation>
    <location>
        <position position="706"/>
    </location>
</feature>
<feature type="sequence variant" id="VAR_043487" description="In MRXSW; reduced receptor expression possibly due to rapid degradation; dbSNP:rs137852350." evidence="9">
    <original>G</original>
    <variation>R</variation>
    <location>
        <position position="833"/>
    </location>
</feature>
<feature type="sequence conflict" description="In Ref. 3; AAF61847." evidence="15" ref="3">
    <original>N</original>
    <variation>H</variation>
    <location>
        <position position="195"/>
    </location>
</feature>
<feature type="sequence conflict" description="In Ref. 1; AAA67922/AAA67923, 2; CAA57567 and 3; AAF61847." evidence="15" ref="1 2 3">
    <original>R</original>
    <variation>G</variation>
    <location>
        <position position="775"/>
    </location>
</feature>
<evidence type="ECO:0000250" key="1"/>
<evidence type="ECO:0000250" key="2">
    <source>
        <dbReference type="UniProtKB" id="P19492"/>
    </source>
</evidence>
<evidence type="ECO:0000250" key="3">
    <source>
        <dbReference type="UniProtKB" id="P23819"/>
    </source>
</evidence>
<evidence type="ECO:0000250" key="4">
    <source>
        <dbReference type="UniProtKB" id="P42262"/>
    </source>
</evidence>
<evidence type="ECO:0000250" key="5">
    <source>
        <dbReference type="UniProtKB" id="Q9Z2W9"/>
    </source>
</evidence>
<evidence type="ECO:0000255" key="6"/>
<evidence type="ECO:0000269" key="7">
    <source>
    </source>
</evidence>
<evidence type="ECO:0000269" key="8">
    <source>
    </source>
</evidence>
<evidence type="ECO:0000269" key="9">
    <source>
    </source>
</evidence>
<evidence type="ECO:0000269" key="10">
    <source>
    </source>
</evidence>
<evidence type="ECO:0000269" key="11">
    <source>
    </source>
</evidence>
<evidence type="ECO:0000269" key="12">
    <source>
    </source>
</evidence>
<evidence type="ECO:0000269" key="13">
    <source>
    </source>
</evidence>
<evidence type="ECO:0000303" key="14">
    <source>
    </source>
</evidence>
<evidence type="ECO:0000305" key="15"/>
<evidence type="ECO:0000312" key="16">
    <source>
        <dbReference type="HGNC" id="HGNC:4573"/>
    </source>
</evidence>
<accession>P42263</accession>
<accession>D3DTF1</accession>
<accession>Q4VXD5</accession>
<accession>Q4VXD6</accession>
<accession>Q9HDA0</accession>
<accession>Q9HDA1</accession>
<accession>Q9HDA2</accession>
<accession>Q9P0H1</accession>
<protein>
    <recommendedName>
        <fullName evidence="15">Glutamate receptor 3</fullName>
        <shortName>GluR-3</shortName>
    </recommendedName>
    <alternativeName>
        <fullName>AMPA-selective glutamate receptor 3</fullName>
    </alternativeName>
    <alternativeName>
        <fullName>GluR-C</fullName>
    </alternativeName>
    <alternativeName>
        <fullName>GluR-K3</fullName>
    </alternativeName>
    <alternativeName>
        <fullName>Glutamate receptor ionotropic, AMPA 3</fullName>
    </alternativeName>
</protein>
<name>GRIA3_HUMAN</name>
<reference key="1">
    <citation type="journal article" date="1994" name="Biochim. Biophys. Acta">
        <title>Human glutamate receptor hGluR3 flip and flop isoforms: cloning and sequencing of the cDNAs and primary structure of the proteins.</title>
        <authorList>
            <person name="Rampersad V."/>
            <person name="Elliott C.E."/>
            <person name="Nutt S.L."/>
            <person name="Foldes R.L."/>
            <person name="Kamboj R.K."/>
        </authorList>
    </citation>
    <scope>NUCLEOTIDE SEQUENCE [MRNA] (ISOFORMS FLIP AND FLOP)</scope>
    <scope>VARIANT LEU-525</scope>
    <source>
        <tissue>Hippocampus</tissue>
    </source>
</reference>
<reference key="2">
    <citation type="submission" date="1994-10" db="EMBL/GenBank/DDBJ databases">
        <authorList>
            <person name="McLaughlin D.P."/>
            <person name="Kerwin R.W."/>
        </authorList>
    </citation>
    <scope>NUCLEOTIDE SEQUENCE [MRNA]</scope>
    <source>
        <tissue>Brain</tissue>
    </source>
</reference>
<reference key="3">
    <citation type="journal article" date="1999" name="Genomics">
        <title>Characterization of the human glutamate receptor subunit 3 gene (GRIA3), a candidate for bipolar disorder and nonspecific X-linked mental retardation.</title>
        <authorList>
            <person name="Gecz J."/>
            <person name="Barnett S."/>
            <person name="Liu J."/>
            <person name="Hollway G."/>
            <person name="Donnelly A."/>
            <person name="Eyre H."/>
            <person name="Eshkevari H.S."/>
            <person name="Baltazar R."/>
            <person name="Grunn A."/>
            <person name="Nagaraja R."/>
            <person name="Gilliam C."/>
            <person name="Peltonen L."/>
            <person name="Sutherland G.R."/>
            <person name="Baron M."/>
            <person name="Mulley J.C."/>
        </authorList>
    </citation>
    <scope>NUCLEOTIDE SEQUENCE [GENOMIC DNA]</scope>
    <scope>VARIANT LEU-525</scope>
</reference>
<reference key="4">
    <citation type="journal article" date="2000" name="Am. J. Med. Genet.">
        <title>Candidate gene analysis in Rett syndrome and the identification of 21 SNPs in Xq.</title>
        <authorList>
            <person name="Amir R."/>
            <person name="Dahle E.J."/>
            <person name="Toriolo D."/>
            <person name="Zoghbi H.Y."/>
        </authorList>
    </citation>
    <scope>NUCLEOTIDE SEQUENCE [GENOMIC DNA]</scope>
    <scope>VARIANT LEU-525</scope>
</reference>
<reference key="5">
    <citation type="journal article" date="2005" name="Nature">
        <title>The DNA sequence of the human X chromosome.</title>
        <authorList>
            <person name="Ross M.T."/>
            <person name="Grafham D.V."/>
            <person name="Coffey A.J."/>
            <person name="Scherer S."/>
            <person name="McLay K."/>
            <person name="Muzny D."/>
            <person name="Platzer M."/>
            <person name="Howell G.R."/>
            <person name="Burrows C."/>
            <person name="Bird C.P."/>
            <person name="Frankish A."/>
            <person name="Lovell F.L."/>
            <person name="Howe K.L."/>
            <person name="Ashurst J.L."/>
            <person name="Fulton R.S."/>
            <person name="Sudbrak R."/>
            <person name="Wen G."/>
            <person name="Jones M.C."/>
            <person name="Hurles M.E."/>
            <person name="Andrews T.D."/>
            <person name="Scott C.E."/>
            <person name="Searle S."/>
            <person name="Ramser J."/>
            <person name="Whittaker A."/>
            <person name="Deadman R."/>
            <person name="Carter N.P."/>
            <person name="Hunt S.E."/>
            <person name="Chen R."/>
            <person name="Cree A."/>
            <person name="Gunaratne P."/>
            <person name="Havlak P."/>
            <person name="Hodgson A."/>
            <person name="Metzker M.L."/>
            <person name="Richards S."/>
            <person name="Scott G."/>
            <person name="Steffen D."/>
            <person name="Sodergren E."/>
            <person name="Wheeler D.A."/>
            <person name="Worley K.C."/>
            <person name="Ainscough R."/>
            <person name="Ambrose K.D."/>
            <person name="Ansari-Lari M.A."/>
            <person name="Aradhya S."/>
            <person name="Ashwell R.I."/>
            <person name="Babbage A.K."/>
            <person name="Bagguley C.L."/>
            <person name="Ballabio A."/>
            <person name="Banerjee R."/>
            <person name="Barker G.E."/>
            <person name="Barlow K.F."/>
            <person name="Barrett I.P."/>
            <person name="Bates K.N."/>
            <person name="Beare D.M."/>
            <person name="Beasley H."/>
            <person name="Beasley O."/>
            <person name="Beck A."/>
            <person name="Bethel G."/>
            <person name="Blechschmidt K."/>
            <person name="Brady N."/>
            <person name="Bray-Allen S."/>
            <person name="Bridgeman A.M."/>
            <person name="Brown A.J."/>
            <person name="Brown M.J."/>
            <person name="Bonnin D."/>
            <person name="Bruford E.A."/>
            <person name="Buhay C."/>
            <person name="Burch P."/>
            <person name="Burford D."/>
            <person name="Burgess J."/>
            <person name="Burrill W."/>
            <person name="Burton J."/>
            <person name="Bye J.M."/>
            <person name="Carder C."/>
            <person name="Carrel L."/>
            <person name="Chako J."/>
            <person name="Chapman J.C."/>
            <person name="Chavez D."/>
            <person name="Chen E."/>
            <person name="Chen G."/>
            <person name="Chen Y."/>
            <person name="Chen Z."/>
            <person name="Chinault C."/>
            <person name="Ciccodicola A."/>
            <person name="Clark S.Y."/>
            <person name="Clarke G."/>
            <person name="Clee C.M."/>
            <person name="Clegg S."/>
            <person name="Clerc-Blankenburg K."/>
            <person name="Clifford K."/>
            <person name="Cobley V."/>
            <person name="Cole C.G."/>
            <person name="Conquer J.S."/>
            <person name="Corby N."/>
            <person name="Connor R.E."/>
            <person name="David R."/>
            <person name="Davies J."/>
            <person name="Davis C."/>
            <person name="Davis J."/>
            <person name="Delgado O."/>
            <person name="Deshazo D."/>
            <person name="Dhami P."/>
            <person name="Ding Y."/>
            <person name="Dinh H."/>
            <person name="Dodsworth S."/>
            <person name="Draper H."/>
            <person name="Dugan-Rocha S."/>
            <person name="Dunham A."/>
            <person name="Dunn M."/>
            <person name="Durbin K.J."/>
            <person name="Dutta I."/>
            <person name="Eades T."/>
            <person name="Ellwood M."/>
            <person name="Emery-Cohen A."/>
            <person name="Errington H."/>
            <person name="Evans K.L."/>
            <person name="Faulkner L."/>
            <person name="Francis F."/>
            <person name="Frankland J."/>
            <person name="Fraser A.E."/>
            <person name="Galgoczy P."/>
            <person name="Gilbert J."/>
            <person name="Gill R."/>
            <person name="Gloeckner G."/>
            <person name="Gregory S.G."/>
            <person name="Gribble S."/>
            <person name="Griffiths C."/>
            <person name="Grocock R."/>
            <person name="Gu Y."/>
            <person name="Gwilliam R."/>
            <person name="Hamilton C."/>
            <person name="Hart E.A."/>
            <person name="Hawes A."/>
            <person name="Heath P.D."/>
            <person name="Heitmann K."/>
            <person name="Hennig S."/>
            <person name="Hernandez J."/>
            <person name="Hinzmann B."/>
            <person name="Ho S."/>
            <person name="Hoffs M."/>
            <person name="Howden P.J."/>
            <person name="Huckle E.J."/>
            <person name="Hume J."/>
            <person name="Hunt P.J."/>
            <person name="Hunt A.R."/>
            <person name="Isherwood J."/>
            <person name="Jacob L."/>
            <person name="Johnson D."/>
            <person name="Jones S."/>
            <person name="de Jong P.J."/>
            <person name="Joseph S.S."/>
            <person name="Keenan S."/>
            <person name="Kelly S."/>
            <person name="Kershaw J.K."/>
            <person name="Khan Z."/>
            <person name="Kioschis P."/>
            <person name="Klages S."/>
            <person name="Knights A.J."/>
            <person name="Kosiura A."/>
            <person name="Kovar-Smith C."/>
            <person name="Laird G.K."/>
            <person name="Langford C."/>
            <person name="Lawlor S."/>
            <person name="Leversha M."/>
            <person name="Lewis L."/>
            <person name="Liu W."/>
            <person name="Lloyd C."/>
            <person name="Lloyd D.M."/>
            <person name="Loulseged H."/>
            <person name="Loveland J.E."/>
            <person name="Lovell J.D."/>
            <person name="Lozado R."/>
            <person name="Lu J."/>
            <person name="Lyne R."/>
            <person name="Ma J."/>
            <person name="Maheshwari M."/>
            <person name="Matthews L.H."/>
            <person name="McDowall J."/>
            <person name="McLaren S."/>
            <person name="McMurray A."/>
            <person name="Meidl P."/>
            <person name="Meitinger T."/>
            <person name="Milne S."/>
            <person name="Miner G."/>
            <person name="Mistry S.L."/>
            <person name="Morgan M."/>
            <person name="Morris S."/>
            <person name="Mueller I."/>
            <person name="Mullikin J.C."/>
            <person name="Nguyen N."/>
            <person name="Nordsiek G."/>
            <person name="Nyakatura G."/>
            <person name="O'dell C.N."/>
            <person name="Okwuonu G."/>
            <person name="Palmer S."/>
            <person name="Pandian R."/>
            <person name="Parker D."/>
            <person name="Parrish J."/>
            <person name="Pasternak S."/>
            <person name="Patel D."/>
            <person name="Pearce A.V."/>
            <person name="Pearson D.M."/>
            <person name="Pelan S.E."/>
            <person name="Perez L."/>
            <person name="Porter K.M."/>
            <person name="Ramsey Y."/>
            <person name="Reichwald K."/>
            <person name="Rhodes S."/>
            <person name="Ridler K.A."/>
            <person name="Schlessinger D."/>
            <person name="Schueler M.G."/>
            <person name="Sehra H.K."/>
            <person name="Shaw-Smith C."/>
            <person name="Shen H."/>
            <person name="Sheridan E.M."/>
            <person name="Shownkeen R."/>
            <person name="Skuce C.D."/>
            <person name="Smith M.L."/>
            <person name="Sotheran E.C."/>
            <person name="Steingruber H.E."/>
            <person name="Steward C.A."/>
            <person name="Storey R."/>
            <person name="Swann R.M."/>
            <person name="Swarbreck D."/>
            <person name="Tabor P.E."/>
            <person name="Taudien S."/>
            <person name="Taylor T."/>
            <person name="Teague B."/>
            <person name="Thomas K."/>
            <person name="Thorpe A."/>
            <person name="Timms K."/>
            <person name="Tracey A."/>
            <person name="Trevanion S."/>
            <person name="Tromans A.C."/>
            <person name="d'Urso M."/>
            <person name="Verduzco D."/>
            <person name="Villasana D."/>
            <person name="Waldron L."/>
            <person name="Wall M."/>
            <person name="Wang Q."/>
            <person name="Warren J."/>
            <person name="Warry G.L."/>
            <person name="Wei X."/>
            <person name="West A."/>
            <person name="Whitehead S.L."/>
            <person name="Whiteley M.N."/>
            <person name="Wilkinson J.E."/>
            <person name="Willey D.L."/>
            <person name="Williams G."/>
            <person name="Williams L."/>
            <person name="Williamson A."/>
            <person name="Williamson H."/>
            <person name="Wilming L."/>
            <person name="Woodmansey R.L."/>
            <person name="Wray P.W."/>
            <person name="Yen J."/>
            <person name="Zhang J."/>
            <person name="Zhou J."/>
            <person name="Zoghbi H."/>
            <person name="Zorilla S."/>
            <person name="Buck D."/>
            <person name="Reinhardt R."/>
            <person name="Poustka A."/>
            <person name="Rosenthal A."/>
            <person name="Lehrach H."/>
            <person name="Meindl A."/>
            <person name="Minx P.J."/>
            <person name="Hillier L.W."/>
            <person name="Willard H.F."/>
            <person name="Wilson R.K."/>
            <person name="Waterston R.H."/>
            <person name="Rice C.M."/>
            <person name="Vaudin M."/>
            <person name="Coulson A."/>
            <person name="Nelson D.L."/>
            <person name="Weinstock G."/>
            <person name="Sulston J.E."/>
            <person name="Durbin R.M."/>
            <person name="Hubbard T."/>
            <person name="Gibbs R.A."/>
            <person name="Beck S."/>
            <person name="Rogers J."/>
            <person name="Bentley D.R."/>
        </authorList>
    </citation>
    <scope>NUCLEOTIDE SEQUENCE [LARGE SCALE GENOMIC DNA]</scope>
</reference>
<reference key="6">
    <citation type="submission" date="2005-09" db="EMBL/GenBank/DDBJ databases">
        <authorList>
            <person name="Mural R.J."/>
            <person name="Istrail S."/>
            <person name="Sutton G.G."/>
            <person name="Florea L."/>
            <person name="Halpern A.L."/>
            <person name="Mobarry C.M."/>
            <person name="Lippert R."/>
            <person name="Walenz B."/>
            <person name="Shatkay H."/>
            <person name="Dew I."/>
            <person name="Miller J.R."/>
            <person name="Flanigan M.J."/>
            <person name="Edwards N.J."/>
            <person name="Bolanos R."/>
            <person name="Fasulo D."/>
            <person name="Halldorsson B.V."/>
            <person name="Hannenhalli S."/>
            <person name="Turner R."/>
            <person name="Yooseph S."/>
            <person name="Lu F."/>
            <person name="Nusskern D.R."/>
            <person name="Shue B.C."/>
            <person name="Zheng X.H."/>
            <person name="Zhong F."/>
            <person name="Delcher A.L."/>
            <person name="Huson D.H."/>
            <person name="Kravitz S.A."/>
            <person name="Mouchard L."/>
            <person name="Reinert K."/>
            <person name="Remington K.A."/>
            <person name="Clark A.G."/>
            <person name="Waterman M.S."/>
            <person name="Eichler E.E."/>
            <person name="Adams M.D."/>
            <person name="Hunkapiller M.W."/>
            <person name="Myers E.W."/>
            <person name="Venter J.C."/>
        </authorList>
    </citation>
    <scope>NUCLEOTIDE SEQUENCE [LARGE SCALE GENOMIC DNA]</scope>
</reference>
<reference key="7">
    <citation type="journal article" date="2010" name="Neuron">
        <title>Hippocampal AMPA receptor gating controlled by both TARP and cornichon proteins.</title>
        <authorList>
            <person name="Kato A.S."/>
            <person name="Gill M.B."/>
            <person name="Ho M.T."/>
            <person name="Yu H."/>
            <person name="Tu Y."/>
            <person name="Siuda E.R."/>
            <person name="Wang H."/>
            <person name="Qian Y.W."/>
            <person name="Nisenbaum E.S."/>
            <person name="Tomita S."/>
            <person name="Bredt D.S."/>
        </authorList>
    </citation>
    <scope>FUNCTION</scope>
</reference>
<reference key="8">
    <citation type="journal article" date="2014" name="Orphanet J. Rare Dis.">
        <title>X-exome sequencing in Finnish families with intellectual disability--four novel mutations and two novel syndromic phenotypes.</title>
        <authorList>
            <person name="Philips A.K."/>
            <person name="Siren A."/>
            <person name="Avela K."/>
            <person name="Somer M."/>
            <person name="Peippo M."/>
            <person name="Ahvenainen M."/>
            <person name="Doagu F."/>
            <person name="Arvio M."/>
            <person name="Kaeaeriaeinen H."/>
            <person name="Van Esch H."/>
            <person name="Froyen G."/>
            <person name="Haas S.A."/>
            <person name="Hu H."/>
            <person name="Kalscheuer V.M."/>
            <person name="Jaervelae I."/>
        </authorList>
    </citation>
    <scope>VARIANT MRXSW ARG-630</scope>
</reference>
<reference key="9">
    <citation type="journal article" date="2007" name="Proc. Natl. Acad. Sci. U.S.A.">
        <title>Mutations in ionotropic AMPA receptor 3 alter channel properties and are associated with moderate cognitive impairment in humans.</title>
        <authorList>
            <person name="Wu Y."/>
            <person name="Arai A.C."/>
            <person name="Rumbaugh G."/>
            <person name="Srivastava A.K."/>
            <person name="Turner G."/>
            <person name="Hayashi T."/>
            <person name="Suzuki E."/>
            <person name="Jiang Y."/>
            <person name="Zhang L."/>
            <person name="Rodriguez J."/>
            <person name="Boyle J."/>
            <person name="Tarpey P."/>
            <person name="Raymond F.L."/>
            <person name="Nevelsteen J."/>
            <person name="Froyen G."/>
            <person name="Stratton M."/>
            <person name="Futreal A."/>
            <person name="Gecz J."/>
            <person name="Stevenson R."/>
            <person name="Schwartz C.E."/>
            <person name="Valle D."/>
            <person name="Huganir R.L."/>
            <person name="Wang T."/>
        </authorList>
    </citation>
    <scope>VARIANTS MRXSW GLN-450; SER-631; THR-706 AND ARG-833</scope>
    <scope>CHARACTERIZATION OF VARIANTS MRXSW SER-631; THR-706 AND ARG-833</scope>
    <scope>FUNCTION</scope>
    <scope>SUBUNIT</scope>
    <scope>SUBCELLULAR LOCATION</scope>
</reference>
<reference key="10">
    <citation type="journal article" date="2018" name="Neuropediatrics">
        <title>Dominant SCN2A Mutation Causes Familial Episodic Ataxia and Impairment of Speech Development.</title>
        <authorList>
            <person name="Fazeli W."/>
            <person name="Becker K."/>
            <person name="Herkenrath P."/>
            <person name="Duechting C."/>
            <person name="Koerber F."/>
            <person name="Landgraf P."/>
            <person name="Nuernberg P."/>
            <person name="Altmueller J."/>
            <person name="Thiele H."/>
            <person name="Koy A."/>
            <person name="Liebau M.C."/>
            <person name="Simon T."/>
            <person name="Doetsch J."/>
            <person name="Cirak S."/>
        </authorList>
    </citation>
    <scope>VARIANT LYS-224</scope>
</reference>